<dbReference type="EC" id="3.4.19.3" evidence="1"/>
<dbReference type="EMBL" id="CP001215">
    <property type="protein sequence ID" value="ACP15756.1"/>
    <property type="molecule type" value="Genomic_DNA"/>
</dbReference>
<dbReference type="RefSeq" id="WP_000859733.1">
    <property type="nucleotide sequence ID" value="NC_012581.1"/>
</dbReference>
<dbReference type="SMR" id="C3LDV2"/>
<dbReference type="MEROPS" id="C15.001"/>
<dbReference type="GeneID" id="45022894"/>
<dbReference type="KEGG" id="bah:BAMEG_1517"/>
<dbReference type="HOGENOM" id="CLU_043960_4_0_9"/>
<dbReference type="GO" id="GO:0005829">
    <property type="term" value="C:cytosol"/>
    <property type="evidence" value="ECO:0007669"/>
    <property type="project" value="InterPro"/>
</dbReference>
<dbReference type="GO" id="GO:0016920">
    <property type="term" value="F:pyroglutamyl-peptidase activity"/>
    <property type="evidence" value="ECO:0007669"/>
    <property type="project" value="UniProtKB-UniRule"/>
</dbReference>
<dbReference type="GO" id="GO:0006508">
    <property type="term" value="P:proteolysis"/>
    <property type="evidence" value="ECO:0007669"/>
    <property type="project" value="UniProtKB-KW"/>
</dbReference>
<dbReference type="CDD" id="cd00501">
    <property type="entry name" value="Peptidase_C15"/>
    <property type="match status" value="1"/>
</dbReference>
<dbReference type="FunFam" id="3.40.630.20:FF:000001">
    <property type="entry name" value="Pyrrolidone-carboxylate peptidase"/>
    <property type="match status" value="1"/>
</dbReference>
<dbReference type="Gene3D" id="3.40.630.20">
    <property type="entry name" value="Peptidase C15, pyroglutamyl peptidase I-like"/>
    <property type="match status" value="1"/>
</dbReference>
<dbReference type="HAMAP" id="MF_00417">
    <property type="entry name" value="Pyrrolid_peptidase"/>
    <property type="match status" value="1"/>
</dbReference>
<dbReference type="InterPro" id="IPR000816">
    <property type="entry name" value="Peptidase_C15"/>
</dbReference>
<dbReference type="InterPro" id="IPR016125">
    <property type="entry name" value="Peptidase_C15-like"/>
</dbReference>
<dbReference type="InterPro" id="IPR036440">
    <property type="entry name" value="Peptidase_C15-like_sf"/>
</dbReference>
<dbReference type="InterPro" id="IPR029762">
    <property type="entry name" value="PGP-I_bact-type"/>
</dbReference>
<dbReference type="InterPro" id="IPR033694">
    <property type="entry name" value="PGPEP1_Cys_AS"/>
</dbReference>
<dbReference type="InterPro" id="IPR033693">
    <property type="entry name" value="PGPEP1_Glu_AS"/>
</dbReference>
<dbReference type="NCBIfam" id="NF009676">
    <property type="entry name" value="PRK13197.1"/>
    <property type="match status" value="1"/>
</dbReference>
<dbReference type="NCBIfam" id="TIGR00504">
    <property type="entry name" value="pyro_pdase"/>
    <property type="match status" value="1"/>
</dbReference>
<dbReference type="PANTHER" id="PTHR23402">
    <property type="entry name" value="PROTEASE FAMILY C15 PYROGLUTAMYL-PEPTIDASE I-RELATED"/>
    <property type="match status" value="1"/>
</dbReference>
<dbReference type="PANTHER" id="PTHR23402:SF1">
    <property type="entry name" value="PYROGLUTAMYL-PEPTIDASE I"/>
    <property type="match status" value="1"/>
</dbReference>
<dbReference type="Pfam" id="PF01470">
    <property type="entry name" value="Peptidase_C15"/>
    <property type="match status" value="1"/>
</dbReference>
<dbReference type="PIRSF" id="PIRSF015592">
    <property type="entry name" value="Prld-crbxl_pptds"/>
    <property type="match status" value="1"/>
</dbReference>
<dbReference type="PRINTS" id="PR00706">
    <property type="entry name" value="PYROGLUPTASE"/>
</dbReference>
<dbReference type="SUPFAM" id="SSF53182">
    <property type="entry name" value="Pyrrolidone carboxyl peptidase (pyroglutamate aminopeptidase)"/>
    <property type="match status" value="1"/>
</dbReference>
<dbReference type="PROSITE" id="PS01334">
    <property type="entry name" value="PYRASE_CYS"/>
    <property type="match status" value="1"/>
</dbReference>
<dbReference type="PROSITE" id="PS01333">
    <property type="entry name" value="PYRASE_GLU"/>
    <property type="match status" value="1"/>
</dbReference>
<organism>
    <name type="scientific">Bacillus anthracis (strain CDC 684 / NRRL 3495)</name>
    <dbReference type="NCBI Taxonomy" id="568206"/>
    <lineage>
        <taxon>Bacteria</taxon>
        <taxon>Bacillati</taxon>
        <taxon>Bacillota</taxon>
        <taxon>Bacilli</taxon>
        <taxon>Bacillales</taxon>
        <taxon>Bacillaceae</taxon>
        <taxon>Bacillus</taxon>
        <taxon>Bacillus cereus group</taxon>
    </lineage>
</organism>
<reference key="1">
    <citation type="submission" date="2008-10" db="EMBL/GenBank/DDBJ databases">
        <title>Genome sequence of Bacillus anthracis str. CDC 684.</title>
        <authorList>
            <person name="Dodson R.J."/>
            <person name="Munk A.C."/>
            <person name="Brettin T."/>
            <person name="Bruce D."/>
            <person name="Detter C."/>
            <person name="Tapia R."/>
            <person name="Han C."/>
            <person name="Sutton G."/>
            <person name="Sims D."/>
        </authorList>
    </citation>
    <scope>NUCLEOTIDE SEQUENCE [LARGE SCALE GENOMIC DNA]</scope>
    <source>
        <strain>CDC 684 / NRRL 3495</strain>
    </source>
</reference>
<name>PCP_BACAC</name>
<evidence type="ECO:0000255" key="1">
    <source>
        <dbReference type="HAMAP-Rule" id="MF_00417"/>
    </source>
</evidence>
<feature type="chain" id="PRO_1000192218" description="Pyrrolidone-carboxylate peptidase">
    <location>
        <begin position="1"/>
        <end position="215"/>
    </location>
</feature>
<feature type="active site" evidence="1">
    <location>
        <position position="80"/>
    </location>
</feature>
<feature type="active site" evidence="1">
    <location>
        <position position="143"/>
    </location>
</feature>
<feature type="active site" evidence="1">
    <location>
        <position position="167"/>
    </location>
</feature>
<gene>
    <name evidence="1" type="primary">pcp</name>
    <name type="ordered locus">BAMEG_1517</name>
</gene>
<protein>
    <recommendedName>
        <fullName evidence="1">Pyrrolidone-carboxylate peptidase</fullName>
        <ecNumber evidence="1">3.4.19.3</ecNumber>
    </recommendedName>
    <alternativeName>
        <fullName evidence="1">5-oxoprolyl-peptidase</fullName>
    </alternativeName>
    <alternativeName>
        <fullName evidence="1">Pyroglutamyl-peptidase I</fullName>
        <shortName evidence="1">PGP-I</shortName>
        <shortName evidence="1">Pyrase</shortName>
    </alternativeName>
</protein>
<accession>C3LDV2</accession>
<sequence length="215" mass="23513">MKTVLLTGFDPFGGESINPAWEVAKSLHEKTIGEYKIISKQVPTVFHKSISVLKEYIEELAPEFIICIGQAGGRPDITIERVAINIDDARIADNEGNQPVDVPVVEEGPAAYWSTLPMKAIVKKLQEEGIPASVSQTAGTFVCNHLFYGLMHELEKHDTKMKGGFIHIPFLPEQASNYPGQPSMSLSTIRKGIELAVEVTTTVEVDIVEVGGTTH</sequence>
<keyword id="KW-0963">Cytoplasm</keyword>
<keyword id="KW-0378">Hydrolase</keyword>
<keyword id="KW-0645">Protease</keyword>
<keyword id="KW-0788">Thiol protease</keyword>
<comment type="function">
    <text evidence="1">Removes 5-oxoproline from various penultimate amino acid residues except L-proline.</text>
</comment>
<comment type="catalytic activity">
    <reaction evidence="1">
        <text>Release of an N-terminal pyroglutamyl group from a polypeptide, the second amino acid generally not being Pro.</text>
        <dbReference type="EC" id="3.4.19.3"/>
    </reaction>
</comment>
<comment type="subunit">
    <text evidence="1">Homotetramer.</text>
</comment>
<comment type="subcellular location">
    <subcellularLocation>
        <location evidence="1">Cytoplasm</location>
    </subcellularLocation>
</comment>
<comment type="similarity">
    <text evidence="1">Belongs to the peptidase C15 family.</text>
</comment>
<proteinExistence type="inferred from homology"/>